<comment type="function">
    <text evidence="1">Plays a central role in chromosome condensation, segregation and cell cycle progression. Functions as a homodimer, which is essential for chromosome partition. Involved in negative DNA supercoiling in vivo, and by this means organize and compact chromosomes. May achieve or facilitate chromosome segregation by condensation DNA from both sides of a centrally located replisome during cell division.</text>
</comment>
<comment type="subunit">
    <text evidence="1">Homodimerization via its hinge domain. Binds to DNA via its C-terminal region. Interacts, and probably forms a ternary complex, with MukE and MukF via its C-terminal region. The complex formation is stimulated by calcium or magnesium. Interacts with tubulin-related protein FtsZ.</text>
</comment>
<comment type="subcellular location">
    <subcellularLocation>
        <location evidence="1">Cytoplasm</location>
        <location evidence="1">Nucleoid</location>
    </subcellularLocation>
    <text evidence="1">Restricted to the nucleoid region.</text>
</comment>
<comment type="domain">
    <text evidence="1">The hinge domain, which separates the large intramolecular coiled coil regions, allows the homodimerization, forming a V-shaped homodimer.</text>
</comment>
<comment type="similarity">
    <text evidence="1">Belongs to the SMC family. MukB subfamily.</text>
</comment>
<organism>
    <name type="scientific">Salmonella schwarzengrund (strain CVM19633)</name>
    <dbReference type="NCBI Taxonomy" id="439843"/>
    <lineage>
        <taxon>Bacteria</taxon>
        <taxon>Pseudomonadati</taxon>
        <taxon>Pseudomonadota</taxon>
        <taxon>Gammaproteobacteria</taxon>
        <taxon>Enterobacterales</taxon>
        <taxon>Enterobacteriaceae</taxon>
        <taxon>Salmonella</taxon>
    </lineage>
</organism>
<accession>B4TRV6</accession>
<feature type="chain" id="PRO_1000187489" description="Chromosome partition protein MukB">
    <location>
        <begin position="1"/>
        <end position="1488"/>
    </location>
</feature>
<feature type="region of interest" description="Flexible hinge" evidence="1">
    <location>
        <begin position="666"/>
        <end position="783"/>
    </location>
</feature>
<feature type="region of interest" description="Disordered" evidence="2">
    <location>
        <begin position="1049"/>
        <end position="1074"/>
    </location>
</feature>
<feature type="coiled-coil region" evidence="1">
    <location>
        <begin position="326"/>
        <end position="418"/>
    </location>
</feature>
<feature type="coiled-coil region" evidence="1">
    <location>
        <begin position="444"/>
        <end position="472"/>
    </location>
</feature>
<feature type="coiled-coil region" evidence="1">
    <location>
        <begin position="509"/>
        <end position="602"/>
    </location>
</feature>
<feature type="coiled-coil region" evidence="1">
    <location>
        <begin position="835"/>
        <end position="923"/>
    </location>
</feature>
<feature type="coiled-coil region" evidence="1">
    <location>
        <begin position="977"/>
        <end position="1116"/>
    </location>
</feature>
<feature type="coiled-coil region" evidence="1">
    <location>
        <begin position="1209"/>
        <end position="1265"/>
    </location>
</feature>
<feature type="compositionally biased region" description="Basic and acidic residues" evidence="2">
    <location>
        <begin position="1051"/>
        <end position="1065"/>
    </location>
</feature>
<feature type="binding site" evidence="1">
    <location>
        <begin position="34"/>
        <end position="41"/>
    </location>
    <ligand>
        <name>ATP</name>
        <dbReference type="ChEBI" id="CHEBI:30616"/>
    </ligand>
</feature>
<proteinExistence type="inferred from homology"/>
<name>MUKB_SALSV</name>
<keyword id="KW-0067">ATP-binding</keyword>
<keyword id="KW-0131">Cell cycle</keyword>
<keyword id="KW-0132">Cell division</keyword>
<keyword id="KW-0159">Chromosome partition</keyword>
<keyword id="KW-0175">Coiled coil</keyword>
<keyword id="KW-0963">Cytoplasm</keyword>
<keyword id="KW-0226">DNA condensation</keyword>
<keyword id="KW-0238">DNA-binding</keyword>
<keyword id="KW-0547">Nucleotide-binding</keyword>
<reference key="1">
    <citation type="journal article" date="2011" name="J. Bacteriol.">
        <title>Comparative genomics of 28 Salmonella enterica isolates: evidence for CRISPR-mediated adaptive sublineage evolution.</title>
        <authorList>
            <person name="Fricke W.F."/>
            <person name="Mammel M.K."/>
            <person name="McDermott P.F."/>
            <person name="Tartera C."/>
            <person name="White D.G."/>
            <person name="Leclerc J.E."/>
            <person name="Ravel J."/>
            <person name="Cebula T.A."/>
        </authorList>
    </citation>
    <scope>NUCLEOTIDE SEQUENCE [LARGE SCALE GENOMIC DNA]</scope>
    <source>
        <strain>CVM19633</strain>
    </source>
</reference>
<evidence type="ECO:0000255" key="1">
    <source>
        <dbReference type="HAMAP-Rule" id="MF_01800"/>
    </source>
</evidence>
<evidence type="ECO:0000256" key="2">
    <source>
        <dbReference type="SAM" id="MobiDB-lite"/>
    </source>
</evidence>
<sequence length="1488" mass="170014">MIERGKFRSLTLINWNGFFARTFDLDELVTTLSGGNGAGKSTTMAAFVTALIPDLTLLHFRNTTEAGATSGSRDKGLHGKLKAGVCYSMLDTINSRHQRVVVGVRLQQVAGRDRKVDIKPFAIQGLPMSVQPTQLVTETLNERQARVLSLAELKDKLDEMEGVQFKQFNSITDYHSLMFDLGIIARRLRSASDRSKFYRLIEASLYGGISSAITRSLRDYLLPENSGVRKAFQDMEAALRENRLTLEAIRVTQSDRDLFKHLISEATDYVAADYMRHANERRVHLDQALAFRRELYTSRKQLAAEQYKHVDMARELGEHNGAEGSLEADYQAASDHLNLVQTALRQQEKIERYEADLEELQIRLEEQNEVVAEAAEMQDENEARAEAAELEVDELKSQLADYQQALDVQQTRAIQYNQAISALARAKELCHLPDLTPESAAEWLDTFQAKEQEATEKLLSLEQKMSVAQTAHSQFEQAYQLVAAINGPLARSEAWDVARELLRDGVNQRHLAEQVQPLRMRLSELEQRLREQQEAERLLAEFCKRQGKNFDIDELEALHQELEARIASLSDSVSSASEQRMALRQEQEQLQSRIQHLMQRAPVWLAAQNSLNQLSEQCGEEFTSSQEVTEYLQQLLEREREAIVERDEVGARKNAVDEEIERLSQPGGAEDQRLNALAERFGGVLLSEIYDDVSLEDAPYFSALYGPSRHAIVVPDLSQIAEQLEGLTDCPEDLYLIEGDPQSFDDSVFSVDELEKAVVVKIADRQWRYSRFPSLPIFGRAARENRIESLHAEREVLSERFATLSFDVQKTQRLHQAFSRFIGSHLSVAFEDDPEAEIRRLNGRRVELERALATHESDNQQQRLQFEQAKEGVSALNRLLPRLNLLADETLADRVDEIQERLDEAQEAARFVQQYGNQLAKLEPVVSVLQSDPEQFEQLKEDYAWSQQMQRDARQQAFALAEVVERRAHFSYSDSAEMLSGNSDLNEKLRQRLEQAEAERTRAREALRSHAAQLSQYSQVLASLKSSYDTKKELLNDLQRELQDIGVRADSGAEERARQRRDELHAQLSNNRSRRNQLEKALTFCEAEMENLARKLRKLERDYHEMREQVVTAKAGWCAVMRMVKDNGVERRLHRRELAYLSADELRSMSDKALGALRLAVADNEHLRDVLRLSEDPKRPERKIQFFVAVYQHLRERIRQDIIRTDDPVEAIEQMEIELSRLTEELTSREQKLAISSRSVANIIRKTIQREQNRIRMLNQGLQSVSFGQVNSVRLNVNVRETHATLLDVLSEQQEQHQDLFNSNRLTFSEALAKLYQRLNPQIDMGQRTPQTIGEELLDYRNYLEMEVEVNRGSDGWLRAESGALSTGEAIGTGMSILVMVVQSWEDEARRLRGKDISPCRLLFLDEAARLDARSIATLFELCERLQMQLIIAAPENISPEKGTTYKLVRKVFQNTEHVHVVGLRGFAPQLPETLPGTQTEDTPSEAS</sequence>
<gene>
    <name evidence="1" type="primary">mukB</name>
    <name type="ordered locus">SeSA_A1108</name>
</gene>
<protein>
    <recommendedName>
        <fullName evidence="1">Chromosome partition protein MukB</fullName>
    </recommendedName>
    <alternativeName>
        <fullName evidence="1">Structural maintenance of chromosome-related protein</fullName>
    </alternativeName>
</protein>
<dbReference type="EMBL" id="CP001127">
    <property type="protein sequence ID" value="ACF89531.1"/>
    <property type="molecule type" value="Genomic_DNA"/>
</dbReference>
<dbReference type="RefSeq" id="WP_000572737.1">
    <property type="nucleotide sequence ID" value="NC_011094.1"/>
</dbReference>
<dbReference type="SMR" id="B4TRV6"/>
<dbReference type="KEGG" id="sew:SeSA_A1108"/>
<dbReference type="HOGENOM" id="CLU_004430_0_0_6"/>
<dbReference type="Proteomes" id="UP000001865">
    <property type="component" value="Chromosome"/>
</dbReference>
<dbReference type="GO" id="GO:0005737">
    <property type="term" value="C:cytoplasm"/>
    <property type="evidence" value="ECO:0007669"/>
    <property type="project" value="UniProtKB-UniRule"/>
</dbReference>
<dbReference type="GO" id="GO:0009295">
    <property type="term" value="C:nucleoid"/>
    <property type="evidence" value="ECO:0007669"/>
    <property type="project" value="UniProtKB-SubCell"/>
</dbReference>
<dbReference type="GO" id="GO:0005524">
    <property type="term" value="F:ATP binding"/>
    <property type="evidence" value="ECO:0007669"/>
    <property type="project" value="UniProtKB-UniRule"/>
</dbReference>
<dbReference type="GO" id="GO:0003677">
    <property type="term" value="F:DNA binding"/>
    <property type="evidence" value="ECO:0007669"/>
    <property type="project" value="UniProtKB-UniRule"/>
</dbReference>
<dbReference type="GO" id="GO:0051301">
    <property type="term" value="P:cell division"/>
    <property type="evidence" value="ECO:0007669"/>
    <property type="project" value="UniProtKB-KW"/>
</dbReference>
<dbReference type="GO" id="GO:0030261">
    <property type="term" value="P:chromosome condensation"/>
    <property type="evidence" value="ECO:0007669"/>
    <property type="project" value="UniProtKB-KW"/>
</dbReference>
<dbReference type="GO" id="GO:0007059">
    <property type="term" value="P:chromosome segregation"/>
    <property type="evidence" value="ECO:0007669"/>
    <property type="project" value="UniProtKB-UniRule"/>
</dbReference>
<dbReference type="GO" id="GO:0006260">
    <property type="term" value="P:DNA replication"/>
    <property type="evidence" value="ECO:0007669"/>
    <property type="project" value="UniProtKB-UniRule"/>
</dbReference>
<dbReference type="FunFam" id="1.20.58.850:FF:000001">
    <property type="entry name" value="Chromosome partition protein MukB"/>
    <property type="match status" value="1"/>
</dbReference>
<dbReference type="FunFam" id="3.30.70.3500:FF:000001">
    <property type="entry name" value="Chromosome partition protein MukB"/>
    <property type="match status" value="1"/>
</dbReference>
<dbReference type="FunFam" id="3.40.1140.10:FF:000001">
    <property type="entry name" value="Chromosome partition protein MukB"/>
    <property type="match status" value="1"/>
</dbReference>
<dbReference type="FunFam" id="3.40.1140.10:FF:000002">
    <property type="entry name" value="Chromosome partition protein MukB"/>
    <property type="match status" value="1"/>
</dbReference>
<dbReference type="Gene3D" id="1.10.287.1490">
    <property type="match status" value="1"/>
</dbReference>
<dbReference type="Gene3D" id="1.20.58.850">
    <property type="match status" value="1"/>
</dbReference>
<dbReference type="Gene3D" id="3.40.1140.10">
    <property type="match status" value="2"/>
</dbReference>
<dbReference type="Gene3D" id="1.20.5.420">
    <property type="entry name" value="Immunoglobulin FC, subunit C"/>
    <property type="match status" value="1"/>
</dbReference>
<dbReference type="Gene3D" id="3.30.70.3500">
    <property type="entry name" value="MukB, hinge domain"/>
    <property type="match status" value="1"/>
</dbReference>
<dbReference type="HAMAP" id="MF_01800">
    <property type="entry name" value="MukB"/>
    <property type="match status" value="1"/>
</dbReference>
<dbReference type="InterPro" id="IPR012090">
    <property type="entry name" value="MukB"/>
</dbReference>
<dbReference type="InterPro" id="IPR050308">
    <property type="entry name" value="MukB/SMC"/>
</dbReference>
<dbReference type="InterPro" id="IPR032520">
    <property type="entry name" value="MukB_hinge"/>
</dbReference>
<dbReference type="InterPro" id="IPR042501">
    <property type="entry name" value="MukB_hinge_sf"/>
</dbReference>
<dbReference type="InterPro" id="IPR007406">
    <property type="entry name" value="MukB_N_dom"/>
</dbReference>
<dbReference type="InterPro" id="IPR027417">
    <property type="entry name" value="P-loop_NTPase"/>
</dbReference>
<dbReference type="NCBIfam" id="NF003422">
    <property type="entry name" value="PRK04863.1"/>
    <property type="match status" value="1"/>
</dbReference>
<dbReference type="PANTHER" id="PTHR42963">
    <property type="entry name" value="CHROMOSOME PARTITION PROTEIN MUKB"/>
    <property type="match status" value="1"/>
</dbReference>
<dbReference type="PANTHER" id="PTHR42963:SF1">
    <property type="entry name" value="DUF4476 DOMAIN-CONTAINING PROTEIN"/>
    <property type="match status" value="1"/>
</dbReference>
<dbReference type="Pfam" id="PF04310">
    <property type="entry name" value="MukB"/>
    <property type="match status" value="1"/>
</dbReference>
<dbReference type="Pfam" id="PF16330">
    <property type="entry name" value="MukB_hinge"/>
    <property type="match status" value="1"/>
</dbReference>
<dbReference type="Pfam" id="PF13558">
    <property type="entry name" value="SbcC_Walker_B"/>
    <property type="match status" value="1"/>
</dbReference>
<dbReference type="PIRSF" id="PIRSF005246">
    <property type="entry name" value="MukB"/>
    <property type="match status" value="1"/>
</dbReference>
<dbReference type="SUPFAM" id="SSF52540">
    <property type="entry name" value="P-loop containing nucleoside triphosphate hydrolases"/>
    <property type="match status" value="2"/>
</dbReference>